<protein>
    <recommendedName>
        <fullName>MAPK-interacting and spindle-stabilizing protein</fullName>
    </recommendedName>
    <alternativeName>
        <fullName>Mitogen-activated protein kinase 1-interacting protein 1</fullName>
    </alternativeName>
</protein>
<comment type="function">
    <text evidence="2">Involved in the maintenance of the spindle integrity during the cytostatic factor (CSF) arrest of oocytes.</text>
</comment>
<comment type="subunit">
    <text evidence="2">Interacts with MAPK1.</text>
</comment>
<comment type="subcellular location">
    <subcellularLocation>
        <location evidence="2">Cytoplasm</location>
    </subcellularLocation>
    <subcellularLocation>
        <location evidence="2">Cytoplasm</location>
        <location evidence="2">Cytoskeleton</location>
        <location evidence="2">Spindle</location>
    </subcellularLocation>
    <text>Colocalizes with the spindle at discrete sites during the second meiotic division.</text>
</comment>
<comment type="developmental stage">
    <text evidence="2">Expressed in ovaries and immature oocytes and two cell stage embryos, then, it disappears. It is unstable during the first meiotic division and accumulates only during the second meiotic division.</text>
</comment>
<comment type="PTM">
    <text evidence="2">Phosphorylated in vitro by MAPK1.</text>
</comment>
<comment type="similarity">
    <text evidence="3">Belongs to the MISS family.</text>
</comment>
<organism>
    <name type="scientific">Mus musculus</name>
    <name type="common">Mouse</name>
    <dbReference type="NCBI Taxonomy" id="10090"/>
    <lineage>
        <taxon>Eukaryota</taxon>
        <taxon>Metazoa</taxon>
        <taxon>Chordata</taxon>
        <taxon>Craniata</taxon>
        <taxon>Vertebrata</taxon>
        <taxon>Euteleostomi</taxon>
        <taxon>Mammalia</taxon>
        <taxon>Eutheria</taxon>
        <taxon>Euarchontoglires</taxon>
        <taxon>Glires</taxon>
        <taxon>Rodentia</taxon>
        <taxon>Myomorpha</taxon>
        <taxon>Muroidea</taxon>
        <taxon>Muridae</taxon>
        <taxon>Murinae</taxon>
        <taxon>Mus</taxon>
        <taxon>Mus</taxon>
    </lineage>
</organism>
<evidence type="ECO:0000256" key="1">
    <source>
        <dbReference type="SAM" id="MobiDB-lite"/>
    </source>
</evidence>
<evidence type="ECO:0000269" key="2">
    <source>
    </source>
</evidence>
<evidence type="ECO:0000305" key="3"/>
<reference key="1">
    <citation type="journal article" date="2005" name="Science">
        <title>The transcriptional landscape of the mammalian genome.</title>
        <authorList>
            <person name="Carninci P."/>
            <person name="Kasukawa T."/>
            <person name="Katayama S."/>
            <person name="Gough J."/>
            <person name="Frith M.C."/>
            <person name="Maeda N."/>
            <person name="Oyama R."/>
            <person name="Ravasi T."/>
            <person name="Lenhard B."/>
            <person name="Wells C."/>
            <person name="Kodzius R."/>
            <person name="Shimokawa K."/>
            <person name="Bajic V.B."/>
            <person name="Brenner S.E."/>
            <person name="Batalov S."/>
            <person name="Forrest A.R."/>
            <person name="Zavolan M."/>
            <person name="Davis M.J."/>
            <person name="Wilming L.G."/>
            <person name="Aidinis V."/>
            <person name="Allen J.E."/>
            <person name="Ambesi-Impiombato A."/>
            <person name="Apweiler R."/>
            <person name="Aturaliya R.N."/>
            <person name="Bailey T.L."/>
            <person name="Bansal M."/>
            <person name="Baxter L."/>
            <person name="Beisel K.W."/>
            <person name="Bersano T."/>
            <person name="Bono H."/>
            <person name="Chalk A.M."/>
            <person name="Chiu K.P."/>
            <person name="Choudhary V."/>
            <person name="Christoffels A."/>
            <person name="Clutterbuck D.R."/>
            <person name="Crowe M.L."/>
            <person name="Dalla E."/>
            <person name="Dalrymple B.P."/>
            <person name="de Bono B."/>
            <person name="Della Gatta G."/>
            <person name="di Bernardo D."/>
            <person name="Down T."/>
            <person name="Engstrom P."/>
            <person name="Fagiolini M."/>
            <person name="Faulkner G."/>
            <person name="Fletcher C.F."/>
            <person name="Fukushima T."/>
            <person name="Furuno M."/>
            <person name="Futaki S."/>
            <person name="Gariboldi M."/>
            <person name="Georgii-Hemming P."/>
            <person name="Gingeras T.R."/>
            <person name="Gojobori T."/>
            <person name="Green R.E."/>
            <person name="Gustincich S."/>
            <person name="Harbers M."/>
            <person name="Hayashi Y."/>
            <person name="Hensch T.K."/>
            <person name="Hirokawa N."/>
            <person name="Hill D."/>
            <person name="Huminiecki L."/>
            <person name="Iacono M."/>
            <person name="Ikeo K."/>
            <person name="Iwama A."/>
            <person name="Ishikawa T."/>
            <person name="Jakt M."/>
            <person name="Kanapin A."/>
            <person name="Katoh M."/>
            <person name="Kawasawa Y."/>
            <person name="Kelso J."/>
            <person name="Kitamura H."/>
            <person name="Kitano H."/>
            <person name="Kollias G."/>
            <person name="Krishnan S.P."/>
            <person name="Kruger A."/>
            <person name="Kummerfeld S.K."/>
            <person name="Kurochkin I.V."/>
            <person name="Lareau L.F."/>
            <person name="Lazarevic D."/>
            <person name="Lipovich L."/>
            <person name="Liu J."/>
            <person name="Liuni S."/>
            <person name="McWilliam S."/>
            <person name="Madan Babu M."/>
            <person name="Madera M."/>
            <person name="Marchionni L."/>
            <person name="Matsuda H."/>
            <person name="Matsuzawa S."/>
            <person name="Miki H."/>
            <person name="Mignone F."/>
            <person name="Miyake S."/>
            <person name="Morris K."/>
            <person name="Mottagui-Tabar S."/>
            <person name="Mulder N."/>
            <person name="Nakano N."/>
            <person name="Nakauchi H."/>
            <person name="Ng P."/>
            <person name="Nilsson R."/>
            <person name="Nishiguchi S."/>
            <person name="Nishikawa S."/>
            <person name="Nori F."/>
            <person name="Ohara O."/>
            <person name="Okazaki Y."/>
            <person name="Orlando V."/>
            <person name="Pang K.C."/>
            <person name="Pavan W.J."/>
            <person name="Pavesi G."/>
            <person name="Pesole G."/>
            <person name="Petrovsky N."/>
            <person name="Piazza S."/>
            <person name="Reed J."/>
            <person name="Reid J.F."/>
            <person name="Ring B.Z."/>
            <person name="Ringwald M."/>
            <person name="Rost B."/>
            <person name="Ruan Y."/>
            <person name="Salzberg S.L."/>
            <person name="Sandelin A."/>
            <person name="Schneider C."/>
            <person name="Schoenbach C."/>
            <person name="Sekiguchi K."/>
            <person name="Semple C.A."/>
            <person name="Seno S."/>
            <person name="Sessa L."/>
            <person name="Sheng Y."/>
            <person name="Shibata Y."/>
            <person name="Shimada H."/>
            <person name="Shimada K."/>
            <person name="Silva D."/>
            <person name="Sinclair B."/>
            <person name="Sperling S."/>
            <person name="Stupka E."/>
            <person name="Sugiura K."/>
            <person name="Sultana R."/>
            <person name="Takenaka Y."/>
            <person name="Taki K."/>
            <person name="Tammoja K."/>
            <person name="Tan S.L."/>
            <person name="Tang S."/>
            <person name="Taylor M.S."/>
            <person name="Tegner J."/>
            <person name="Teichmann S.A."/>
            <person name="Ueda H.R."/>
            <person name="van Nimwegen E."/>
            <person name="Verardo R."/>
            <person name="Wei C.L."/>
            <person name="Yagi K."/>
            <person name="Yamanishi H."/>
            <person name="Zabarovsky E."/>
            <person name="Zhu S."/>
            <person name="Zimmer A."/>
            <person name="Hide W."/>
            <person name="Bult C."/>
            <person name="Grimmond S.M."/>
            <person name="Teasdale R.D."/>
            <person name="Liu E.T."/>
            <person name="Brusic V."/>
            <person name="Quackenbush J."/>
            <person name="Wahlestedt C."/>
            <person name="Mattick J.S."/>
            <person name="Hume D.A."/>
            <person name="Kai C."/>
            <person name="Sasaki D."/>
            <person name="Tomaru Y."/>
            <person name="Fukuda S."/>
            <person name="Kanamori-Katayama M."/>
            <person name="Suzuki M."/>
            <person name="Aoki J."/>
            <person name="Arakawa T."/>
            <person name="Iida J."/>
            <person name="Imamura K."/>
            <person name="Itoh M."/>
            <person name="Kato T."/>
            <person name="Kawaji H."/>
            <person name="Kawagashira N."/>
            <person name="Kawashima T."/>
            <person name="Kojima M."/>
            <person name="Kondo S."/>
            <person name="Konno H."/>
            <person name="Nakano K."/>
            <person name="Ninomiya N."/>
            <person name="Nishio T."/>
            <person name="Okada M."/>
            <person name="Plessy C."/>
            <person name="Shibata K."/>
            <person name="Shiraki T."/>
            <person name="Suzuki S."/>
            <person name="Tagami M."/>
            <person name="Waki K."/>
            <person name="Watahiki A."/>
            <person name="Okamura-Oho Y."/>
            <person name="Suzuki H."/>
            <person name="Kawai J."/>
            <person name="Hayashizaki Y."/>
        </authorList>
    </citation>
    <scope>NUCLEOTIDE SEQUENCE [LARGE SCALE MRNA]</scope>
    <source>
        <strain>C57BL/6J</strain>
        <tissue>Tongue</tissue>
    </source>
</reference>
<reference key="2">
    <citation type="journal article" date="2004" name="Genome Res.">
        <title>The status, quality, and expansion of the NIH full-length cDNA project: the Mammalian Gene Collection (MGC).</title>
        <authorList>
            <consortium name="The MGC Project Team"/>
        </authorList>
    </citation>
    <scope>NUCLEOTIDE SEQUENCE [LARGE SCALE MRNA]</scope>
    <source>
        <tissue>Eye</tissue>
    </source>
</reference>
<reference key="3">
    <citation type="journal article" date="2002" name="J. Cell Biol.">
        <title>Meiotic spindle stability depends on MAPK-interacting and spindle-stabilizing protein (MISS), a new MAPK substrate.</title>
        <authorList>
            <person name="Lefebvre C."/>
            <person name="Terret M.E."/>
            <person name="Djiane A."/>
            <person name="Rassinier P."/>
            <person name="Maro B."/>
            <person name="Verlhac M.-H."/>
        </authorList>
    </citation>
    <scope>FUNCTION</scope>
    <scope>SUBCELLULAR LOCATION</scope>
    <scope>DEVELOPMENTAL STAGE</scope>
    <scope>PHOSPHORYLATION</scope>
    <scope>INTERACTION WITH MAPK1</scope>
</reference>
<feature type="chain" id="PRO_0000209888" description="MAPK-interacting and spindle-stabilizing protein">
    <location>
        <begin position="1"/>
        <end position="263"/>
    </location>
</feature>
<feature type="region of interest" description="Disordered" evidence="1">
    <location>
        <begin position="13"/>
        <end position="238"/>
    </location>
</feature>
<feature type="compositionally biased region" description="Pro residues" evidence="1">
    <location>
        <begin position="14"/>
        <end position="34"/>
    </location>
</feature>
<feature type="compositionally biased region" description="Pro residues" evidence="1">
    <location>
        <begin position="140"/>
        <end position="155"/>
    </location>
</feature>
<feature type="compositionally biased region" description="Low complexity" evidence="1">
    <location>
        <begin position="156"/>
        <end position="165"/>
    </location>
</feature>
<feature type="compositionally biased region" description="Polar residues" evidence="1">
    <location>
        <begin position="176"/>
        <end position="189"/>
    </location>
</feature>
<feature type="compositionally biased region" description="Basic residues" evidence="1">
    <location>
        <begin position="202"/>
        <end position="213"/>
    </location>
</feature>
<sequence>MYPFIPPARLLPGSPAPFLPSGPSCPQPSGPYPGPAVRVPGPTRSYVSTNVPFPELPRPNSAPTDPVGPLGTQGSMSSGPWAPGMGGQHPNVPYLFPESSPTPPLPVSGAPPVAWVTVPPGAWEPPAQYPTPEASYPSPGLQPSPNNPYPLPPGPSAASPGPGSLHRMNEIPGGSPSDSSNPESTLESTGQKKHLKLDNKSIKRRRSKKKSKRVTWGDIKTLTHKAESLGKQQGHNTTDPKMMLLCLMTMLHVNSQHESEGSK</sequence>
<proteinExistence type="evidence at protein level"/>
<name>MISS_MOUSE</name>
<accession>Q9D7G9</accession>
<accession>Q7M749</accession>
<keyword id="KW-0963">Cytoplasm</keyword>
<keyword id="KW-0206">Cytoskeleton</keyword>
<keyword id="KW-0217">Developmental protein</keyword>
<keyword id="KW-0469">Meiosis</keyword>
<keyword id="KW-0597">Phosphoprotein</keyword>
<keyword id="KW-1185">Reference proteome</keyword>
<gene>
    <name type="primary">Mapk1ip1</name>
    <name type="synonym">Miss</name>
</gene>
<dbReference type="EMBL" id="AK009250">
    <property type="protein sequence ID" value="BAB26168.1"/>
    <property type="molecule type" value="mRNA"/>
</dbReference>
<dbReference type="EMBL" id="BC069850">
    <property type="protein sequence ID" value="AAH69850.1"/>
    <property type="molecule type" value="mRNA"/>
</dbReference>
<dbReference type="EMBL" id="BK000579">
    <property type="protein sequence ID" value="DAA00064.1"/>
    <property type="molecule type" value="mRNA"/>
</dbReference>
<dbReference type="CCDS" id="CCDS21949.1"/>
<dbReference type="RefSeq" id="NP_001038948.1">
    <property type="nucleotide sequence ID" value="NM_001045483.1"/>
</dbReference>
<dbReference type="RefSeq" id="NP_081391.1">
    <property type="nucleotide sequence ID" value="NM_027115.2"/>
</dbReference>
<dbReference type="RefSeq" id="XP_017167778.1">
    <property type="nucleotide sequence ID" value="XM_017312289.1"/>
</dbReference>
<dbReference type="FunCoup" id="Q9D7G9">
    <property type="interactions" value="2"/>
</dbReference>
<dbReference type="MINT" id="Q9D7G9"/>
<dbReference type="STRING" id="10090.ENSMUSP00000112631"/>
<dbReference type="GlyGen" id="Q9D7G9">
    <property type="glycosylation" value="3 sites"/>
</dbReference>
<dbReference type="PaxDb" id="10090-ENSMUSP00000075090"/>
<dbReference type="DNASU" id="69546"/>
<dbReference type="Ensembl" id="ENSMUST00000075667.5">
    <property type="protein sequence ID" value="ENSMUSP00000075090.5"/>
    <property type="gene ID" value="ENSMUSG00000041775.8"/>
</dbReference>
<dbReference type="Ensembl" id="ENSMUST00000118810.2">
    <property type="protein sequence ID" value="ENSMUSP00000113813.2"/>
    <property type="gene ID" value="ENSMUSG00000041775.8"/>
</dbReference>
<dbReference type="Ensembl" id="ENSMUST00000119664.2">
    <property type="protein sequence ID" value="ENSMUSP00000112631.2"/>
    <property type="gene ID" value="ENSMUSG00000041775.8"/>
</dbReference>
<dbReference type="GeneID" id="69546"/>
<dbReference type="KEGG" id="mmu:69546"/>
<dbReference type="UCSC" id="uc009kfc.1">
    <property type="organism name" value="mouse"/>
</dbReference>
<dbReference type="AGR" id="MGI:1916796"/>
<dbReference type="CTD" id="69546"/>
<dbReference type="MGI" id="MGI:1916796">
    <property type="gene designation" value="Mapk1ip1"/>
</dbReference>
<dbReference type="VEuPathDB" id="HostDB:ENSMUSG00000041775"/>
<dbReference type="eggNOG" id="ENOG502RYAB">
    <property type="taxonomic scope" value="Eukaryota"/>
</dbReference>
<dbReference type="GeneTree" id="ENSGT00730000111340"/>
<dbReference type="HOGENOM" id="CLU_1057552_0_0_1"/>
<dbReference type="InParanoid" id="Q9D7G9"/>
<dbReference type="OrthoDB" id="9398504at2759"/>
<dbReference type="PhylomeDB" id="Q9D7G9"/>
<dbReference type="BioGRID-ORCS" id="69546">
    <property type="hits" value="0 hits in 77 CRISPR screens"/>
</dbReference>
<dbReference type="ChiTaRS" id="Mapk1ip1">
    <property type="organism name" value="mouse"/>
</dbReference>
<dbReference type="PRO" id="PR:Q9D7G9"/>
<dbReference type="Proteomes" id="UP000000589">
    <property type="component" value="Chromosome 7"/>
</dbReference>
<dbReference type="RNAct" id="Q9D7G9">
    <property type="molecule type" value="protein"/>
</dbReference>
<dbReference type="Bgee" id="ENSMUSG00000041775">
    <property type="expression patterns" value="Expressed in primary oocyte and 231 other cell types or tissues"/>
</dbReference>
<dbReference type="GO" id="GO:0005737">
    <property type="term" value="C:cytoplasm"/>
    <property type="evidence" value="ECO:0007669"/>
    <property type="project" value="UniProtKB-SubCell"/>
</dbReference>
<dbReference type="GO" id="GO:0005819">
    <property type="term" value="C:spindle"/>
    <property type="evidence" value="ECO:0007669"/>
    <property type="project" value="UniProtKB-SubCell"/>
</dbReference>
<dbReference type="GO" id="GO:0042802">
    <property type="term" value="F:identical protein binding"/>
    <property type="evidence" value="ECO:0000353"/>
    <property type="project" value="MGI"/>
</dbReference>
<dbReference type="GO" id="GO:0051321">
    <property type="term" value="P:meiotic cell cycle"/>
    <property type="evidence" value="ECO:0007669"/>
    <property type="project" value="UniProtKB-KW"/>
</dbReference>
<dbReference type="InterPro" id="IPR031653">
    <property type="entry name" value="MISS"/>
</dbReference>
<dbReference type="PANTHER" id="PTHR35973:SF2">
    <property type="entry name" value="MAPK-INTERACTING AND SPINDLE-STABILIZING PROTEIN"/>
    <property type="match status" value="1"/>
</dbReference>
<dbReference type="PANTHER" id="PTHR35973">
    <property type="entry name" value="MAPK-INTERACTING AND SPINDLE-STABILIZING PROTEIN-LIKE"/>
    <property type="match status" value="1"/>
</dbReference>
<dbReference type="Pfam" id="PF15822">
    <property type="entry name" value="MISS"/>
    <property type="match status" value="1"/>
</dbReference>